<name>CPFR7_XENRU</name>
<organism evidence="3">
    <name type="scientific">Xenopus ruwenzoriensis</name>
    <name type="common">Uganda clawed frog</name>
    <dbReference type="NCBI Taxonomy" id="105430"/>
    <lineage>
        <taxon>Eukaryota</taxon>
        <taxon>Metazoa</taxon>
        <taxon>Chordata</taxon>
        <taxon>Craniata</taxon>
        <taxon>Vertebrata</taxon>
        <taxon>Euteleostomi</taxon>
        <taxon>Amphibia</taxon>
        <taxon>Batrachia</taxon>
        <taxon>Anura</taxon>
        <taxon>Pipoidea</taxon>
        <taxon>Pipidae</taxon>
        <taxon>Xenopodinae</taxon>
        <taxon>Xenopus</taxon>
        <taxon>Xenopus</taxon>
    </lineage>
</organism>
<accession>C0HKN1</accession>
<feature type="peptide" id="PRO_0000440917" description="Caerulein precursor fragment R7" evidence="2">
    <location>
        <begin position="1"/>
        <end position="27"/>
    </location>
</feature>
<comment type="function">
    <text evidence="1">Antimicrobial peptide.</text>
</comment>
<comment type="subcellular location">
    <subcellularLocation>
        <location evidence="2">Secreted</location>
    </subcellularLocation>
</comment>
<comment type="tissue specificity">
    <text evidence="5">Expressed by the skin glands.</text>
</comment>
<comment type="mass spectrometry"/>
<comment type="similarity">
    <text evidence="4">Belongs to the gastrin/cholecystokinin family.</text>
</comment>
<protein>
    <recommendedName>
        <fullName evidence="3">Caerulein precursor fragment R7</fullName>
    </recommendedName>
    <alternativeName>
        <fullName evidence="3">CPF-R7</fullName>
    </alternativeName>
</protein>
<keyword id="KW-0878">Amphibian defense peptide</keyword>
<keyword id="KW-0929">Antimicrobial</keyword>
<keyword id="KW-0903">Direct protein sequencing</keyword>
<keyword id="KW-0964">Secreted</keyword>
<sequence>GLASFLGKALKAGLKIGAHLLGGAPQQ</sequence>
<reference evidence="4" key="1">
    <citation type="journal article" date="2016" name="Comp. Biochem. Physiol.">
        <title>Peptidomic analysis of the extensive array of host-defense peptides in skin secretions of the dodecaploid frog Xenopus ruwenzoriensis (Pipidae).</title>
        <authorList>
            <person name="Coquet L."/>
            <person name="Kolodziejek J."/>
            <person name="Jouenne T."/>
            <person name="Nowotny N."/>
            <person name="King J.D."/>
            <person name="Conlon J.M."/>
        </authorList>
    </citation>
    <scope>PROTEIN SEQUENCE</scope>
    <scope>SUBCELLULAR LOCATION</scope>
    <scope>MASS SPECTROMETRY</scope>
    <source>
        <tissue evidence="3">Skin secretion</tissue>
    </source>
</reference>
<proteinExistence type="evidence at protein level"/>
<dbReference type="GO" id="GO:0005576">
    <property type="term" value="C:extracellular region"/>
    <property type="evidence" value="ECO:0007669"/>
    <property type="project" value="UniProtKB-SubCell"/>
</dbReference>
<dbReference type="GO" id="GO:0006952">
    <property type="term" value="P:defense response"/>
    <property type="evidence" value="ECO:0007669"/>
    <property type="project" value="UniProtKB-KW"/>
</dbReference>
<evidence type="ECO:0000250" key="1">
    <source>
        <dbReference type="UniProtKB" id="C0HK89"/>
    </source>
</evidence>
<evidence type="ECO:0000269" key="2">
    <source>
    </source>
</evidence>
<evidence type="ECO:0000303" key="3">
    <source>
    </source>
</evidence>
<evidence type="ECO:0000305" key="4"/>
<evidence type="ECO:0000305" key="5">
    <source>
    </source>
</evidence>